<feature type="chain" id="PRO_1000090069" description="Glutamate--tRNA ligase">
    <location>
        <begin position="1"/>
        <end position="484"/>
    </location>
</feature>
<feature type="short sequence motif" description="'HIGH' region" evidence="1">
    <location>
        <begin position="9"/>
        <end position="19"/>
    </location>
</feature>
<feature type="short sequence motif" description="'KMSKS' region" evidence="1">
    <location>
        <begin position="250"/>
        <end position="254"/>
    </location>
</feature>
<feature type="binding site" evidence="1">
    <location>
        <position position="98"/>
    </location>
    <ligand>
        <name>Zn(2+)</name>
        <dbReference type="ChEBI" id="CHEBI:29105"/>
    </ligand>
</feature>
<feature type="binding site" evidence="1">
    <location>
        <position position="100"/>
    </location>
    <ligand>
        <name>Zn(2+)</name>
        <dbReference type="ChEBI" id="CHEBI:29105"/>
    </ligand>
</feature>
<feature type="binding site" evidence="1">
    <location>
        <position position="125"/>
    </location>
    <ligand>
        <name>Zn(2+)</name>
        <dbReference type="ChEBI" id="CHEBI:29105"/>
    </ligand>
</feature>
<feature type="binding site" evidence="1">
    <location>
        <position position="127"/>
    </location>
    <ligand>
        <name>Zn(2+)</name>
        <dbReference type="ChEBI" id="CHEBI:29105"/>
    </ligand>
</feature>
<feature type="binding site" evidence="1">
    <location>
        <position position="253"/>
    </location>
    <ligand>
        <name>ATP</name>
        <dbReference type="ChEBI" id="CHEBI:30616"/>
    </ligand>
</feature>
<dbReference type="EC" id="6.1.1.17" evidence="1"/>
<dbReference type="EMBL" id="CP000806">
    <property type="protein sequence ID" value="ACB51108.1"/>
    <property type="molecule type" value="Genomic_DNA"/>
</dbReference>
<dbReference type="RefSeq" id="WP_009545573.1">
    <property type="nucleotide sequence ID" value="NC_010546.1"/>
</dbReference>
<dbReference type="SMR" id="B1WYU1"/>
<dbReference type="STRING" id="43989.cce_1758"/>
<dbReference type="KEGG" id="cyt:cce_1758"/>
<dbReference type="eggNOG" id="COG0008">
    <property type="taxonomic scope" value="Bacteria"/>
</dbReference>
<dbReference type="HOGENOM" id="CLU_015768_6_0_3"/>
<dbReference type="OrthoDB" id="9807503at2"/>
<dbReference type="Proteomes" id="UP000001203">
    <property type="component" value="Chromosome circular"/>
</dbReference>
<dbReference type="GO" id="GO:0005829">
    <property type="term" value="C:cytosol"/>
    <property type="evidence" value="ECO:0007669"/>
    <property type="project" value="TreeGrafter"/>
</dbReference>
<dbReference type="GO" id="GO:0005524">
    <property type="term" value="F:ATP binding"/>
    <property type="evidence" value="ECO:0007669"/>
    <property type="project" value="UniProtKB-UniRule"/>
</dbReference>
<dbReference type="GO" id="GO:0004818">
    <property type="term" value="F:glutamate-tRNA ligase activity"/>
    <property type="evidence" value="ECO:0007669"/>
    <property type="project" value="UniProtKB-UniRule"/>
</dbReference>
<dbReference type="GO" id="GO:0000049">
    <property type="term" value="F:tRNA binding"/>
    <property type="evidence" value="ECO:0007669"/>
    <property type="project" value="InterPro"/>
</dbReference>
<dbReference type="GO" id="GO:0008270">
    <property type="term" value="F:zinc ion binding"/>
    <property type="evidence" value="ECO:0007669"/>
    <property type="project" value="UniProtKB-UniRule"/>
</dbReference>
<dbReference type="GO" id="GO:0006424">
    <property type="term" value="P:glutamyl-tRNA aminoacylation"/>
    <property type="evidence" value="ECO:0007669"/>
    <property type="project" value="UniProtKB-UniRule"/>
</dbReference>
<dbReference type="CDD" id="cd00808">
    <property type="entry name" value="GluRS_core"/>
    <property type="match status" value="1"/>
</dbReference>
<dbReference type="FunFam" id="3.40.50.620:FF:000007">
    <property type="entry name" value="Glutamate--tRNA ligase"/>
    <property type="match status" value="1"/>
</dbReference>
<dbReference type="Gene3D" id="1.10.10.350">
    <property type="match status" value="1"/>
</dbReference>
<dbReference type="Gene3D" id="1.10.8.70">
    <property type="entry name" value="Glutamate-tRNA synthetase, class I, anticodon-binding domain 1"/>
    <property type="match status" value="1"/>
</dbReference>
<dbReference type="Gene3D" id="1.10.1160.10">
    <property type="entry name" value="Glutamyl-trna Synthetase, Domain 2"/>
    <property type="match status" value="1"/>
</dbReference>
<dbReference type="Gene3D" id="3.90.800.10">
    <property type="entry name" value="Glutamyl-tRNA Synthetase, Domain 3"/>
    <property type="match status" value="1"/>
</dbReference>
<dbReference type="Gene3D" id="3.40.50.620">
    <property type="entry name" value="HUPs"/>
    <property type="match status" value="1"/>
</dbReference>
<dbReference type="HAMAP" id="MF_00022">
    <property type="entry name" value="Glu_tRNA_synth_type1"/>
    <property type="match status" value="1"/>
</dbReference>
<dbReference type="InterPro" id="IPR045462">
    <property type="entry name" value="aa-tRNA-synth_I_cd-bd"/>
</dbReference>
<dbReference type="InterPro" id="IPR020751">
    <property type="entry name" value="aa-tRNA-synth_I_codon-bd_sub2"/>
</dbReference>
<dbReference type="InterPro" id="IPR001412">
    <property type="entry name" value="aa-tRNA-synth_I_CS"/>
</dbReference>
<dbReference type="InterPro" id="IPR008925">
    <property type="entry name" value="aa_tRNA-synth_I_cd-bd_sf"/>
</dbReference>
<dbReference type="InterPro" id="IPR004527">
    <property type="entry name" value="Glu-tRNA-ligase_bac/mito"/>
</dbReference>
<dbReference type="InterPro" id="IPR020752">
    <property type="entry name" value="Glu-tRNA-synth_I_codon-bd_sub1"/>
</dbReference>
<dbReference type="InterPro" id="IPR000924">
    <property type="entry name" value="Glu/Gln-tRNA-synth"/>
</dbReference>
<dbReference type="InterPro" id="IPR020058">
    <property type="entry name" value="Glu/Gln-tRNA-synth_Ib_cat-dom"/>
</dbReference>
<dbReference type="InterPro" id="IPR020061">
    <property type="entry name" value="Glu_tRNA_lig_a-bdl"/>
</dbReference>
<dbReference type="InterPro" id="IPR049940">
    <property type="entry name" value="GluQ/Sye"/>
</dbReference>
<dbReference type="InterPro" id="IPR033910">
    <property type="entry name" value="GluRS_core"/>
</dbReference>
<dbReference type="InterPro" id="IPR014729">
    <property type="entry name" value="Rossmann-like_a/b/a_fold"/>
</dbReference>
<dbReference type="NCBIfam" id="TIGR00464">
    <property type="entry name" value="gltX_bact"/>
    <property type="match status" value="1"/>
</dbReference>
<dbReference type="PANTHER" id="PTHR43311">
    <property type="entry name" value="GLUTAMATE--TRNA LIGASE"/>
    <property type="match status" value="1"/>
</dbReference>
<dbReference type="PANTHER" id="PTHR43311:SF2">
    <property type="entry name" value="GLUTAMATE--TRNA LIGASE, MITOCHONDRIAL-RELATED"/>
    <property type="match status" value="1"/>
</dbReference>
<dbReference type="Pfam" id="PF19269">
    <property type="entry name" value="Anticodon_2"/>
    <property type="match status" value="1"/>
</dbReference>
<dbReference type="Pfam" id="PF00749">
    <property type="entry name" value="tRNA-synt_1c"/>
    <property type="match status" value="1"/>
</dbReference>
<dbReference type="PRINTS" id="PR00987">
    <property type="entry name" value="TRNASYNTHGLU"/>
</dbReference>
<dbReference type="SUPFAM" id="SSF48163">
    <property type="entry name" value="An anticodon-binding domain of class I aminoacyl-tRNA synthetases"/>
    <property type="match status" value="1"/>
</dbReference>
<dbReference type="SUPFAM" id="SSF52374">
    <property type="entry name" value="Nucleotidylyl transferase"/>
    <property type="match status" value="1"/>
</dbReference>
<dbReference type="PROSITE" id="PS00178">
    <property type="entry name" value="AA_TRNA_LIGASE_I"/>
    <property type="match status" value="1"/>
</dbReference>
<comment type="function">
    <text evidence="1">Catalyzes the attachment of glutamate to tRNA(Glu) in a two-step reaction: glutamate is first activated by ATP to form Glu-AMP and then transferred to the acceptor end of tRNA(Glu).</text>
</comment>
<comment type="catalytic activity">
    <reaction evidence="1">
        <text>tRNA(Glu) + L-glutamate + ATP = L-glutamyl-tRNA(Glu) + AMP + diphosphate</text>
        <dbReference type="Rhea" id="RHEA:23540"/>
        <dbReference type="Rhea" id="RHEA-COMP:9663"/>
        <dbReference type="Rhea" id="RHEA-COMP:9680"/>
        <dbReference type="ChEBI" id="CHEBI:29985"/>
        <dbReference type="ChEBI" id="CHEBI:30616"/>
        <dbReference type="ChEBI" id="CHEBI:33019"/>
        <dbReference type="ChEBI" id="CHEBI:78442"/>
        <dbReference type="ChEBI" id="CHEBI:78520"/>
        <dbReference type="ChEBI" id="CHEBI:456215"/>
        <dbReference type="EC" id="6.1.1.17"/>
    </reaction>
</comment>
<comment type="cofactor">
    <cofactor evidence="1">
        <name>Zn(2+)</name>
        <dbReference type="ChEBI" id="CHEBI:29105"/>
    </cofactor>
    <text evidence="1">Binds 1 zinc ion per subunit.</text>
</comment>
<comment type="subunit">
    <text evidence="1">Monomer.</text>
</comment>
<comment type="subcellular location">
    <subcellularLocation>
        <location evidence="1">Cytoplasm</location>
    </subcellularLocation>
</comment>
<comment type="similarity">
    <text evidence="1">Belongs to the class-I aminoacyl-tRNA synthetase family. Glutamate--tRNA ligase type 1 subfamily.</text>
</comment>
<reference key="1">
    <citation type="journal article" date="2008" name="Proc. Natl. Acad. Sci. U.S.A.">
        <title>The genome of Cyanothece 51142, a unicellular diazotrophic cyanobacterium important in the marine nitrogen cycle.</title>
        <authorList>
            <person name="Welsh E.A."/>
            <person name="Liberton M."/>
            <person name="Stoeckel J."/>
            <person name="Loh T."/>
            <person name="Elvitigala T."/>
            <person name="Wang C."/>
            <person name="Wollam A."/>
            <person name="Fulton R.S."/>
            <person name="Clifton S.W."/>
            <person name="Jacobs J.M."/>
            <person name="Aurora R."/>
            <person name="Ghosh B.K."/>
            <person name="Sherman L.A."/>
            <person name="Smith R.D."/>
            <person name="Wilson R.K."/>
            <person name="Pakrasi H.B."/>
        </authorList>
    </citation>
    <scope>NUCLEOTIDE SEQUENCE [LARGE SCALE GENOMIC DNA]</scope>
    <source>
        <strain>ATCC 51142 / BH68</strain>
    </source>
</reference>
<keyword id="KW-0030">Aminoacyl-tRNA synthetase</keyword>
<keyword id="KW-0067">ATP-binding</keyword>
<keyword id="KW-0963">Cytoplasm</keyword>
<keyword id="KW-0436">Ligase</keyword>
<keyword id="KW-0479">Metal-binding</keyword>
<keyword id="KW-0547">Nucleotide-binding</keyword>
<keyword id="KW-0648">Protein biosynthesis</keyword>
<keyword id="KW-1185">Reference proteome</keyword>
<keyword id="KW-0862">Zinc</keyword>
<proteinExistence type="inferred from homology"/>
<name>SYE_CROS5</name>
<sequence length="484" mass="55281">MTVRVRIAPSPTGNLHIGTARTAVFNWLFAHHHQGQFILRVEDTDRERSRAEYTENIKSGLAWLGLTWDEGPFFQTQRLDLYRQGIQTLLDKGFAYRCYCTPEELEQMREAQKAQNQAPRYDNRHRHLTEEQRQGLEAQGRKPVIRFIIDDDREIVWHDLIRGKMTWKGSDLGGDMVIARIADNPDQPFGQPLYNLAVVVDDMDMKITHVIRGEDHIANTAKQILLYEALGATVPEFAHTPLILNQEGRKLSKRDGVTSIDDFRKMGFLPQALANYMTLLGWTPPDSTQEIFTLTEAAQQFSLERVNKAGAKFDWDKLDWINSQYVHKMSGEELVDLLVPYWQEAGYPINIDSDRPWLEKMATLIGPSLTRLSDAAKESVLLFGGRVDYSEEAIAQMKQDGVKDVLQAVVEKIQESSQLTEDEAKDTIKQVTKTFKVKKGLVMRSLRAGLMGELHGPDLIQSWLLLHEKGWDKTRLTHGLSLVE</sequence>
<organism>
    <name type="scientific">Crocosphaera subtropica (strain ATCC 51142 / BH68)</name>
    <name type="common">Cyanothece sp. (strain ATCC 51142)</name>
    <dbReference type="NCBI Taxonomy" id="43989"/>
    <lineage>
        <taxon>Bacteria</taxon>
        <taxon>Bacillati</taxon>
        <taxon>Cyanobacteriota</taxon>
        <taxon>Cyanophyceae</taxon>
        <taxon>Oscillatoriophycideae</taxon>
        <taxon>Chroococcales</taxon>
        <taxon>Aphanothecaceae</taxon>
        <taxon>Crocosphaera</taxon>
        <taxon>Crocosphaera subtropica</taxon>
    </lineage>
</organism>
<protein>
    <recommendedName>
        <fullName evidence="1">Glutamate--tRNA ligase</fullName>
        <ecNumber evidence="1">6.1.1.17</ecNumber>
    </recommendedName>
    <alternativeName>
        <fullName evidence="1">Glutamyl-tRNA synthetase</fullName>
        <shortName evidence="1">GluRS</shortName>
    </alternativeName>
</protein>
<evidence type="ECO:0000255" key="1">
    <source>
        <dbReference type="HAMAP-Rule" id="MF_00022"/>
    </source>
</evidence>
<accession>B1WYU1</accession>
<gene>
    <name evidence="1" type="primary">gltX</name>
    <name type="ordered locus">cce_1758</name>
</gene>